<gene>
    <name evidence="1" type="primary">pfdA</name>
    <name type="ordered locus">Mthe_1565</name>
</gene>
<comment type="function">
    <text evidence="1">Molecular chaperone capable of stabilizing a range of proteins. Seems to fulfill an ATP-independent, HSP70-like function in archaeal de novo protein folding.</text>
</comment>
<comment type="subunit">
    <text evidence="1">Heterohexamer of two alpha and four beta subunits.</text>
</comment>
<comment type="subcellular location">
    <subcellularLocation>
        <location evidence="1">Cytoplasm</location>
    </subcellularLocation>
</comment>
<comment type="similarity">
    <text evidence="2">Belongs to the prefoldin subunit alpha family.</text>
</comment>
<keyword id="KW-0143">Chaperone</keyword>
<keyword id="KW-0963">Cytoplasm</keyword>
<keyword id="KW-1185">Reference proteome</keyword>
<accession>A0B9G1</accession>
<reference key="1">
    <citation type="submission" date="2006-10" db="EMBL/GenBank/DDBJ databases">
        <title>Complete sequence of Methanosaeta thermophila PT.</title>
        <authorList>
            <consortium name="US DOE Joint Genome Institute"/>
            <person name="Copeland A."/>
            <person name="Lucas S."/>
            <person name="Lapidus A."/>
            <person name="Barry K."/>
            <person name="Detter J.C."/>
            <person name="Glavina del Rio T."/>
            <person name="Hammon N."/>
            <person name="Israni S."/>
            <person name="Pitluck S."/>
            <person name="Chain P."/>
            <person name="Malfatti S."/>
            <person name="Shin M."/>
            <person name="Vergez L."/>
            <person name="Schmutz J."/>
            <person name="Larimer F."/>
            <person name="Land M."/>
            <person name="Hauser L."/>
            <person name="Kyrpides N."/>
            <person name="Kim E."/>
            <person name="Smith K.S."/>
            <person name="Ingram-Smith C."/>
            <person name="Richardson P."/>
        </authorList>
    </citation>
    <scope>NUCLEOTIDE SEQUENCE [LARGE SCALE GENOMIC DNA]</scope>
    <source>
        <strain>DSM 6194 / JCM 14653 / NBRC 101360 / PT</strain>
    </source>
</reference>
<sequence>MSGKPQSPENQARQLIVAYQQYQAEAESLVRELGLIQMTAEGLDKAISAIGALSKAAEGQEMLVPIGSGSFAYAKLSSADRVVVNVGGGVSIEKPAEEAMEMLRARRSAISESSKKINEALAKIEQEMARIQAALERLERELQKQGGSEGFVQ</sequence>
<organism>
    <name type="scientific">Methanothrix thermoacetophila (strain DSM 6194 / JCM 14653 / NBRC 101360 / PT)</name>
    <name type="common">Methanosaeta thermophila</name>
    <dbReference type="NCBI Taxonomy" id="349307"/>
    <lineage>
        <taxon>Archaea</taxon>
        <taxon>Methanobacteriati</taxon>
        <taxon>Methanobacteriota</taxon>
        <taxon>Stenosarchaea group</taxon>
        <taxon>Methanomicrobia</taxon>
        <taxon>Methanotrichales</taxon>
        <taxon>Methanotrichaceae</taxon>
        <taxon>Methanothrix</taxon>
    </lineage>
</organism>
<feature type="chain" id="PRO_0000300764" description="Prefoldin subunit alpha">
    <location>
        <begin position="1"/>
        <end position="153"/>
    </location>
</feature>
<evidence type="ECO:0000255" key="1">
    <source>
        <dbReference type="HAMAP-Rule" id="MF_00308"/>
    </source>
</evidence>
<evidence type="ECO:0000305" key="2"/>
<dbReference type="EMBL" id="CP000477">
    <property type="protein sequence ID" value="ABK15335.1"/>
    <property type="molecule type" value="Genomic_DNA"/>
</dbReference>
<dbReference type="RefSeq" id="WP_011696714.1">
    <property type="nucleotide sequence ID" value="NC_008553.1"/>
</dbReference>
<dbReference type="SMR" id="A0B9G1"/>
<dbReference type="STRING" id="349307.Mthe_1565"/>
<dbReference type="GeneID" id="4461857"/>
<dbReference type="KEGG" id="mtp:Mthe_1565"/>
<dbReference type="HOGENOM" id="CLU_091867_1_1_2"/>
<dbReference type="OrthoDB" id="10045at2157"/>
<dbReference type="Proteomes" id="UP000000674">
    <property type="component" value="Chromosome"/>
</dbReference>
<dbReference type="GO" id="GO:0005737">
    <property type="term" value="C:cytoplasm"/>
    <property type="evidence" value="ECO:0007669"/>
    <property type="project" value="UniProtKB-SubCell"/>
</dbReference>
<dbReference type="GO" id="GO:0016272">
    <property type="term" value="C:prefoldin complex"/>
    <property type="evidence" value="ECO:0007669"/>
    <property type="project" value="UniProtKB-UniRule"/>
</dbReference>
<dbReference type="GO" id="GO:0051082">
    <property type="term" value="F:unfolded protein binding"/>
    <property type="evidence" value="ECO:0007669"/>
    <property type="project" value="UniProtKB-UniRule"/>
</dbReference>
<dbReference type="GO" id="GO:0006457">
    <property type="term" value="P:protein folding"/>
    <property type="evidence" value="ECO:0007669"/>
    <property type="project" value="UniProtKB-UniRule"/>
</dbReference>
<dbReference type="CDD" id="cd23160">
    <property type="entry name" value="Prefoldin_alpha_GimC"/>
    <property type="match status" value="1"/>
</dbReference>
<dbReference type="Gene3D" id="1.10.287.370">
    <property type="match status" value="1"/>
</dbReference>
<dbReference type="HAMAP" id="MF_00308">
    <property type="entry name" value="PfdA"/>
    <property type="match status" value="1"/>
</dbReference>
<dbReference type="InterPro" id="IPR011599">
    <property type="entry name" value="PFD_alpha_archaea"/>
</dbReference>
<dbReference type="InterPro" id="IPR009053">
    <property type="entry name" value="Prefoldin"/>
</dbReference>
<dbReference type="InterPro" id="IPR004127">
    <property type="entry name" value="Prefoldin_subunit_alpha"/>
</dbReference>
<dbReference type="NCBIfam" id="TIGR00293">
    <property type="entry name" value="prefoldin subunit alpha"/>
    <property type="match status" value="1"/>
</dbReference>
<dbReference type="PANTHER" id="PTHR12674">
    <property type="entry name" value="PREFOLDIN SUBUNIT 5"/>
    <property type="match status" value="1"/>
</dbReference>
<dbReference type="PANTHER" id="PTHR12674:SF4">
    <property type="entry name" value="PREFOLDIN SUBUNIT ALPHA 2"/>
    <property type="match status" value="1"/>
</dbReference>
<dbReference type="Pfam" id="PF02996">
    <property type="entry name" value="Prefoldin"/>
    <property type="match status" value="1"/>
</dbReference>
<dbReference type="SUPFAM" id="SSF46579">
    <property type="entry name" value="Prefoldin"/>
    <property type="match status" value="1"/>
</dbReference>
<proteinExistence type="inferred from homology"/>
<protein>
    <recommendedName>
        <fullName evidence="1">Prefoldin subunit alpha</fullName>
    </recommendedName>
    <alternativeName>
        <fullName evidence="1">GimC subunit alpha</fullName>
    </alternativeName>
</protein>
<name>PFDA_METTP</name>